<keyword id="KW-0297">G-protein coupled receptor</keyword>
<keyword id="KW-0325">Glycoprotein</keyword>
<keyword id="KW-0472">Membrane</keyword>
<keyword id="KW-0675">Receptor</keyword>
<keyword id="KW-1185">Reference proteome</keyword>
<keyword id="KW-0716">Sensory transduction</keyword>
<keyword id="KW-0919">Taste</keyword>
<keyword id="KW-0807">Transducer</keyword>
<keyword id="KW-0812">Transmembrane</keyword>
<keyword id="KW-1133">Transmembrane helix</keyword>
<feature type="chain" id="PRO_0000082213" description="Taste receptor type 2 member 5">
    <location>
        <begin position="1"/>
        <end position="299"/>
    </location>
</feature>
<feature type="topological domain" description="Extracellular" evidence="2">
    <location>
        <position position="1"/>
    </location>
</feature>
<feature type="transmembrane region" description="Helical; Name=1" evidence="2">
    <location>
        <begin position="2"/>
        <end position="22"/>
    </location>
</feature>
<feature type="topological domain" description="Cytoplasmic" evidence="2">
    <location>
        <begin position="23"/>
        <end position="45"/>
    </location>
</feature>
<feature type="transmembrane region" description="Helical; Name=2" evidence="2">
    <location>
        <begin position="46"/>
        <end position="66"/>
    </location>
</feature>
<feature type="topological domain" description="Extracellular" evidence="2">
    <location>
        <begin position="67"/>
        <end position="82"/>
    </location>
</feature>
<feature type="transmembrane region" description="Helical; Name=3" evidence="2">
    <location>
        <begin position="83"/>
        <end position="103"/>
    </location>
</feature>
<feature type="topological domain" description="Cytoplasmic" evidence="2">
    <location>
        <begin position="104"/>
        <end position="127"/>
    </location>
</feature>
<feature type="transmembrane region" description="Helical; Name=4" evidence="2">
    <location>
        <begin position="128"/>
        <end position="148"/>
    </location>
</feature>
<feature type="topological domain" description="Extracellular" evidence="2">
    <location>
        <begin position="149"/>
        <end position="175"/>
    </location>
</feature>
<feature type="transmembrane region" description="Helical; Name=5" evidence="2">
    <location>
        <begin position="176"/>
        <end position="196"/>
    </location>
</feature>
<feature type="topological domain" description="Cytoplasmic" evidence="2">
    <location>
        <begin position="197"/>
        <end position="223"/>
    </location>
</feature>
<feature type="transmembrane region" description="Helical; Name=6" evidence="2">
    <location>
        <begin position="224"/>
        <end position="244"/>
    </location>
</feature>
<feature type="topological domain" description="Extracellular" evidence="2">
    <location>
        <begin position="245"/>
        <end position="253"/>
    </location>
</feature>
<feature type="transmembrane region" description="Helical; Name=7" evidence="2">
    <location>
        <begin position="254"/>
        <end position="274"/>
    </location>
</feature>
<feature type="topological domain" description="Cytoplasmic" evidence="2">
    <location>
        <begin position="275"/>
        <end position="299"/>
    </location>
</feature>
<feature type="glycosylation site" description="N-linked (GlcNAc...) asparagine" evidence="2">
    <location>
        <position position="155"/>
    </location>
</feature>
<sequence>MLSAGLGLLMLVAVVEFLIGLIGNGVLVVWSFREWIRKFSWSSYNLIILGLAGCRFVLQWLIILDLSLFPLFQSSRWLRYLSIFWVLVSQASLWFATFLSVFYCKKITTFDHPAYLWLKQRAYNLSLWCLLGYFIINLLLTVQIGLMFYHPPQGNSSIRYPFESWQYLYAFRLNSGSYLPLMVFLVSSGMLIVSLYTHHKKMKVHSAGRRDVRAKAHITALKSLGCFLLLHLVYIMASPFSIASKTYPPDLTSVFIWETLMAAYPSLHSLILIMGIPRVKQTCQKILWKTVCARRCWGP</sequence>
<dbReference type="EMBL" id="AY724858">
    <property type="protein sequence ID" value="AAU21084.1"/>
    <property type="molecule type" value="Genomic_DNA"/>
</dbReference>
<dbReference type="EMBL" id="AY677135">
    <property type="protein sequence ID" value="AAV28564.1"/>
    <property type="molecule type" value="Genomic_DNA"/>
</dbReference>
<dbReference type="RefSeq" id="XP_003813420.1">
    <property type="nucleotide sequence ID" value="XM_003813372.2"/>
</dbReference>
<dbReference type="SMR" id="Q646D5"/>
<dbReference type="STRING" id="9597.ENSPPAP00000002152"/>
<dbReference type="GlyCosmos" id="Q646D5">
    <property type="glycosylation" value="1 site, No reported glycans"/>
</dbReference>
<dbReference type="Ensembl" id="ENSPPAT00000010571.1">
    <property type="protein sequence ID" value="ENSPPAP00000002152.1"/>
    <property type="gene ID" value="ENSPPAG00000009772.1"/>
</dbReference>
<dbReference type="eggNOG" id="ENOG502S2SI">
    <property type="taxonomic scope" value="Eukaryota"/>
</dbReference>
<dbReference type="GeneTree" id="ENSGT01100000263477"/>
<dbReference type="OMA" id="CRFLLQW"/>
<dbReference type="Proteomes" id="UP000240080">
    <property type="component" value="Chromosome 7"/>
</dbReference>
<dbReference type="Bgee" id="ENSPPAG00000009772">
    <property type="expression patterns" value="Expressed in heart"/>
</dbReference>
<dbReference type="GO" id="GO:0005886">
    <property type="term" value="C:plasma membrane"/>
    <property type="evidence" value="ECO:0007669"/>
    <property type="project" value="UniProtKB-ARBA"/>
</dbReference>
<dbReference type="GO" id="GO:0033038">
    <property type="term" value="F:bitter taste receptor activity"/>
    <property type="evidence" value="ECO:0007669"/>
    <property type="project" value="Ensembl"/>
</dbReference>
<dbReference type="GO" id="GO:0004930">
    <property type="term" value="F:G protein-coupled receptor activity"/>
    <property type="evidence" value="ECO:0007669"/>
    <property type="project" value="UniProtKB-KW"/>
</dbReference>
<dbReference type="CDD" id="cd13950">
    <property type="entry name" value="7tm_TAS2R"/>
    <property type="match status" value="1"/>
</dbReference>
<dbReference type="FunFam" id="1.20.1070.10:FF:000055">
    <property type="entry name" value="Taste receptor type 2"/>
    <property type="match status" value="1"/>
</dbReference>
<dbReference type="Gene3D" id="1.20.1070.10">
    <property type="entry name" value="Rhodopsin 7-helix transmembrane proteins"/>
    <property type="match status" value="1"/>
</dbReference>
<dbReference type="InterPro" id="IPR007960">
    <property type="entry name" value="TAS2R"/>
</dbReference>
<dbReference type="PANTHER" id="PTHR11394">
    <property type="entry name" value="TASTE RECEPTOR TYPE 2"/>
    <property type="match status" value="1"/>
</dbReference>
<dbReference type="PANTHER" id="PTHR11394:SF8">
    <property type="entry name" value="TASTE RECEPTOR TYPE 2 MEMBER 5"/>
    <property type="match status" value="1"/>
</dbReference>
<dbReference type="Pfam" id="PF05296">
    <property type="entry name" value="TAS2R"/>
    <property type="match status" value="1"/>
</dbReference>
<dbReference type="SUPFAM" id="SSF81321">
    <property type="entry name" value="Family A G protein-coupled receptor-like"/>
    <property type="match status" value="1"/>
</dbReference>
<comment type="function">
    <text evidence="1">Receptor that may play a role in the perception of bitterness and is gustducin-linked. May play a role in sensing the chemical composition of the gastrointestinal content. The activity of this receptor may stimulate alpha gustducin, mediate PLC-beta-2 activation and lead to the gating of TRPM5 (By similarity).</text>
</comment>
<comment type="subcellular location">
    <subcellularLocation>
        <location>Membrane</location>
        <topology>Multi-pass membrane protein</topology>
    </subcellularLocation>
</comment>
<comment type="miscellaneous">
    <text>Most taste cells may be activated by a limited number of bitter compounds; individual taste cells can discriminate among bitter stimuli.</text>
</comment>
<comment type="similarity">
    <text evidence="3">Belongs to the G-protein coupled receptor T2R family.</text>
</comment>
<name>TA2R5_PANPA</name>
<gene>
    <name type="primary">TAS2R5</name>
</gene>
<accession>Q646D5</accession>
<organism>
    <name type="scientific">Pan paniscus</name>
    <name type="common">Pygmy chimpanzee</name>
    <name type="synonym">Bonobo</name>
    <dbReference type="NCBI Taxonomy" id="9597"/>
    <lineage>
        <taxon>Eukaryota</taxon>
        <taxon>Metazoa</taxon>
        <taxon>Chordata</taxon>
        <taxon>Craniata</taxon>
        <taxon>Vertebrata</taxon>
        <taxon>Euteleostomi</taxon>
        <taxon>Mammalia</taxon>
        <taxon>Eutheria</taxon>
        <taxon>Euarchontoglires</taxon>
        <taxon>Primates</taxon>
        <taxon>Haplorrhini</taxon>
        <taxon>Catarrhini</taxon>
        <taxon>Hominidae</taxon>
        <taxon>Pan</taxon>
    </lineage>
</organism>
<reference key="1">
    <citation type="journal article" date="2005" name="Mol. Biol. Evol.">
        <title>Evolution of bitter taste receptors in humans and apes.</title>
        <authorList>
            <person name="Fischer A."/>
            <person name="Gilad Y."/>
            <person name="Man O."/>
            <person name="Paeaebo S."/>
        </authorList>
    </citation>
    <scope>NUCLEOTIDE SEQUENCE [GENOMIC DNA]</scope>
</reference>
<reference key="2">
    <citation type="journal article" date="2004" name="Proc. Natl. Acad. Sci. U.S.A.">
        <title>Divergence of T2R chemosensory receptor families in humans, bonobos, and chimpanzees.</title>
        <authorList>
            <person name="Parry C.M."/>
            <person name="Erkner A."/>
            <person name="le Coutre J."/>
        </authorList>
    </citation>
    <scope>NUCLEOTIDE SEQUENCE [GENOMIC DNA]</scope>
</reference>
<proteinExistence type="inferred from homology"/>
<evidence type="ECO:0000250" key="1"/>
<evidence type="ECO:0000255" key="2"/>
<evidence type="ECO:0000305" key="3"/>
<protein>
    <recommendedName>
        <fullName>Taste receptor type 2 member 5</fullName>
        <shortName>T2R5</shortName>
    </recommendedName>
</protein>